<keyword id="KW-0025">Alternative splicing</keyword>
<keyword id="KW-0067">ATP-binding</keyword>
<keyword id="KW-0963">Cytoplasm</keyword>
<keyword id="KW-0547">Nucleotide-binding</keyword>
<keyword id="KW-1185">Reference proteome</keyword>
<keyword id="KW-0808">Transferase</keyword>
<keyword id="KW-0832">Ubl conjugation</keyword>
<keyword id="KW-0833">Ubl conjugation pathway</keyword>
<protein>
    <recommendedName>
        <fullName>Ubiquitin-conjugating enzyme E2 Q2</fullName>
        <ecNumber>2.3.2.23</ecNumber>
    </recommendedName>
    <alternativeName>
        <fullName>E2 ubiquitin-conjugating enzyme Q2</fullName>
    </alternativeName>
    <alternativeName>
        <fullName>Ubiquitin carrier protein Q2</fullName>
    </alternativeName>
    <alternativeName>
        <fullName>Ubiquitin-protein ligase Q2</fullName>
    </alternativeName>
</protein>
<organism>
    <name type="scientific">Mus musculus</name>
    <name type="common">Mouse</name>
    <dbReference type="NCBI Taxonomy" id="10090"/>
    <lineage>
        <taxon>Eukaryota</taxon>
        <taxon>Metazoa</taxon>
        <taxon>Chordata</taxon>
        <taxon>Craniata</taxon>
        <taxon>Vertebrata</taxon>
        <taxon>Euteleostomi</taxon>
        <taxon>Mammalia</taxon>
        <taxon>Eutheria</taxon>
        <taxon>Euarchontoglires</taxon>
        <taxon>Glires</taxon>
        <taxon>Rodentia</taxon>
        <taxon>Myomorpha</taxon>
        <taxon>Muroidea</taxon>
        <taxon>Muridae</taxon>
        <taxon>Murinae</taxon>
        <taxon>Mus</taxon>
        <taxon>Mus</taxon>
    </lineage>
</organism>
<dbReference type="EC" id="2.3.2.23"/>
<dbReference type="EMBL" id="AK083216">
    <property type="protein sequence ID" value="BAC38813.1"/>
    <property type="molecule type" value="mRNA"/>
</dbReference>
<dbReference type="EMBL" id="AK076148">
    <property type="protein sequence ID" value="BAC36218.1"/>
    <property type="molecule type" value="mRNA"/>
</dbReference>
<dbReference type="EMBL" id="AK042515">
    <property type="protein sequence ID" value="BAE20633.1"/>
    <property type="molecule type" value="mRNA"/>
</dbReference>
<dbReference type="EMBL" id="AK150776">
    <property type="protein sequence ID" value="BAE29841.1"/>
    <property type="molecule type" value="mRNA"/>
</dbReference>
<dbReference type="EMBL" id="BC029111">
    <property type="protein sequence ID" value="AAH29111.1"/>
    <property type="molecule type" value="mRNA"/>
</dbReference>
<dbReference type="CCDS" id="CCDS23201.1">
    <molecule id="Q8K2Z8-1"/>
</dbReference>
<dbReference type="CCDS" id="CCDS85678.1">
    <molecule id="Q8K2Z8-2"/>
</dbReference>
<dbReference type="RefSeq" id="NP_001333587.1">
    <molecule id="Q8K2Z8-2"/>
    <property type="nucleotide sequence ID" value="NM_001346658.1"/>
</dbReference>
<dbReference type="RefSeq" id="NP_850931.2">
    <molecule id="Q8K2Z8-1"/>
    <property type="nucleotide sequence ID" value="NM_180600.3"/>
</dbReference>
<dbReference type="SMR" id="Q8K2Z8"/>
<dbReference type="BioGRID" id="224579">
    <property type="interactions" value="1"/>
</dbReference>
<dbReference type="FunCoup" id="Q8K2Z8">
    <property type="interactions" value="4085"/>
</dbReference>
<dbReference type="STRING" id="10090.ENSMUSP00000059798"/>
<dbReference type="iPTMnet" id="Q8K2Z8"/>
<dbReference type="PhosphoSitePlus" id="Q8K2Z8"/>
<dbReference type="PaxDb" id="10090-ENSMUSP00000059798"/>
<dbReference type="PeptideAtlas" id="Q8K2Z8"/>
<dbReference type="ProteomicsDB" id="297775">
    <molecule id="Q8K2Z8-1"/>
</dbReference>
<dbReference type="ProteomicsDB" id="297776">
    <molecule id="Q8K2Z8-2"/>
</dbReference>
<dbReference type="Antibodypedia" id="27387">
    <property type="antibodies" value="205 antibodies from 28 providers"/>
</dbReference>
<dbReference type="DNASU" id="109161"/>
<dbReference type="Ensembl" id="ENSMUST00000059555.15">
    <molecule id="Q8K2Z8-1"/>
    <property type="protein sequence ID" value="ENSMUSP00000059798.9"/>
    <property type="gene ID" value="ENSMUSG00000032307.17"/>
</dbReference>
<dbReference type="Ensembl" id="ENSMUST00000122441.2">
    <molecule id="Q8K2Z8-2"/>
    <property type="protein sequence ID" value="ENSMUSP00000112745.2"/>
    <property type="gene ID" value="ENSMUSG00000032307.17"/>
</dbReference>
<dbReference type="GeneID" id="109161"/>
<dbReference type="KEGG" id="mmu:109161"/>
<dbReference type="UCSC" id="uc009psb.2">
    <molecule id="Q8K2Z8-1"/>
    <property type="organism name" value="mouse"/>
</dbReference>
<dbReference type="AGR" id="MGI:2388672"/>
<dbReference type="CTD" id="92912"/>
<dbReference type="MGI" id="MGI:2388672">
    <property type="gene designation" value="Ube2q2"/>
</dbReference>
<dbReference type="VEuPathDB" id="HostDB:ENSMUSG00000032307"/>
<dbReference type="eggNOG" id="KOG0897">
    <property type="taxonomic scope" value="Eukaryota"/>
</dbReference>
<dbReference type="GeneTree" id="ENSGT00940000155357"/>
<dbReference type="HOGENOM" id="CLU_053863_0_0_1"/>
<dbReference type="InParanoid" id="Q8K2Z8"/>
<dbReference type="OMA" id="KWLICDL"/>
<dbReference type="OrthoDB" id="109543at2759"/>
<dbReference type="PhylomeDB" id="Q8K2Z8"/>
<dbReference type="TreeFam" id="TF313338"/>
<dbReference type="Reactome" id="R-MMU-8866652">
    <property type="pathway name" value="Synthesis of active ubiquitin: roles of E1 and E2 enzymes"/>
</dbReference>
<dbReference type="Reactome" id="R-MMU-983168">
    <property type="pathway name" value="Antigen processing: Ubiquitination &amp; Proteasome degradation"/>
</dbReference>
<dbReference type="UniPathway" id="UPA00143"/>
<dbReference type="BioGRID-ORCS" id="109161">
    <property type="hits" value="0 hits in 77 CRISPR screens"/>
</dbReference>
<dbReference type="ChiTaRS" id="Ube2q2">
    <property type="organism name" value="mouse"/>
</dbReference>
<dbReference type="PRO" id="PR:Q8K2Z8"/>
<dbReference type="Proteomes" id="UP000000589">
    <property type="component" value="Chromosome 9"/>
</dbReference>
<dbReference type="RNAct" id="Q8K2Z8">
    <property type="molecule type" value="protein"/>
</dbReference>
<dbReference type="Bgee" id="ENSMUSG00000032307">
    <property type="expression patterns" value="Expressed in superior cervical ganglion and 223 other cell types or tissues"/>
</dbReference>
<dbReference type="ExpressionAtlas" id="Q8K2Z8">
    <property type="expression patterns" value="baseline and differential"/>
</dbReference>
<dbReference type="GO" id="GO:0005737">
    <property type="term" value="C:cytoplasm"/>
    <property type="evidence" value="ECO:0007669"/>
    <property type="project" value="UniProtKB-SubCell"/>
</dbReference>
<dbReference type="GO" id="GO:0005524">
    <property type="term" value="F:ATP binding"/>
    <property type="evidence" value="ECO:0007669"/>
    <property type="project" value="UniProtKB-KW"/>
</dbReference>
<dbReference type="GO" id="GO:0061631">
    <property type="term" value="F:ubiquitin conjugating enzyme activity"/>
    <property type="evidence" value="ECO:0000314"/>
    <property type="project" value="MGI"/>
</dbReference>
<dbReference type="GO" id="GO:0004842">
    <property type="term" value="F:ubiquitin-protein transferase activity"/>
    <property type="evidence" value="ECO:0000250"/>
    <property type="project" value="UniProtKB"/>
</dbReference>
<dbReference type="GO" id="GO:0070936">
    <property type="term" value="P:protein K48-linked ubiquitination"/>
    <property type="evidence" value="ECO:0000250"/>
    <property type="project" value="UniProtKB"/>
</dbReference>
<dbReference type="CDD" id="cd23802">
    <property type="entry name" value="UBCc_UBE2Q"/>
    <property type="match status" value="1"/>
</dbReference>
<dbReference type="FunFam" id="3.10.110.10:FF:000006">
    <property type="entry name" value="Ubiquitin-conjugating enzyme E2 Q2"/>
    <property type="match status" value="1"/>
</dbReference>
<dbReference type="FunFam" id="3.10.110.10:FF:000055">
    <property type="entry name" value="ubiquitin-conjugating enzyme E2 Q2 isoform X2"/>
    <property type="match status" value="1"/>
</dbReference>
<dbReference type="Gene3D" id="3.10.110.10">
    <property type="entry name" value="Ubiquitin Conjugating Enzyme"/>
    <property type="match status" value="2"/>
</dbReference>
<dbReference type="InterPro" id="IPR006575">
    <property type="entry name" value="RWD_dom"/>
</dbReference>
<dbReference type="InterPro" id="IPR000608">
    <property type="entry name" value="UBQ-conjugat_E2_core"/>
</dbReference>
<dbReference type="InterPro" id="IPR016135">
    <property type="entry name" value="UBQ-conjugating_enzyme/RWD"/>
</dbReference>
<dbReference type="Pfam" id="PF05773">
    <property type="entry name" value="RWD"/>
    <property type="match status" value="1"/>
</dbReference>
<dbReference type="Pfam" id="PF00179">
    <property type="entry name" value="UQ_con"/>
    <property type="match status" value="1"/>
</dbReference>
<dbReference type="SMART" id="SM00212">
    <property type="entry name" value="UBCc"/>
    <property type="match status" value="1"/>
</dbReference>
<dbReference type="SUPFAM" id="SSF54495">
    <property type="entry name" value="UBC-like"/>
    <property type="match status" value="2"/>
</dbReference>
<dbReference type="PROSITE" id="PS50127">
    <property type="entry name" value="UBC_2"/>
    <property type="match status" value="1"/>
</dbReference>
<gene>
    <name type="primary">Ube2q2</name>
</gene>
<proteinExistence type="evidence at transcript level"/>
<reference key="1">
    <citation type="journal article" date="2005" name="Science">
        <title>The transcriptional landscape of the mammalian genome.</title>
        <authorList>
            <person name="Carninci P."/>
            <person name="Kasukawa T."/>
            <person name="Katayama S."/>
            <person name="Gough J."/>
            <person name="Frith M.C."/>
            <person name="Maeda N."/>
            <person name="Oyama R."/>
            <person name="Ravasi T."/>
            <person name="Lenhard B."/>
            <person name="Wells C."/>
            <person name="Kodzius R."/>
            <person name="Shimokawa K."/>
            <person name="Bajic V.B."/>
            <person name="Brenner S.E."/>
            <person name="Batalov S."/>
            <person name="Forrest A.R."/>
            <person name="Zavolan M."/>
            <person name="Davis M.J."/>
            <person name="Wilming L.G."/>
            <person name="Aidinis V."/>
            <person name="Allen J.E."/>
            <person name="Ambesi-Impiombato A."/>
            <person name="Apweiler R."/>
            <person name="Aturaliya R.N."/>
            <person name="Bailey T.L."/>
            <person name="Bansal M."/>
            <person name="Baxter L."/>
            <person name="Beisel K.W."/>
            <person name="Bersano T."/>
            <person name="Bono H."/>
            <person name="Chalk A.M."/>
            <person name="Chiu K.P."/>
            <person name="Choudhary V."/>
            <person name="Christoffels A."/>
            <person name="Clutterbuck D.R."/>
            <person name="Crowe M.L."/>
            <person name="Dalla E."/>
            <person name="Dalrymple B.P."/>
            <person name="de Bono B."/>
            <person name="Della Gatta G."/>
            <person name="di Bernardo D."/>
            <person name="Down T."/>
            <person name="Engstrom P."/>
            <person name="Fagiolini M."/>
            <person name="Faulkner G."/>
            <person name="Fletcher C.F."/>
            <person name="Fukushima T."/>
            <person name="Furuno M."/>
            <person name="Futaki S."/>
            <person name="Gariboldi M."/>
            <person name="Georgii-Hemming P."/>
            <person name="Gingeras T.R."/>
            <person name="Gojobori T."/>
            <person name="Green R.E."/>
            <person name="Gustincich S."/>
            <person name="Harbers M."/>
            <person name="Hayashi Y."/>
            <person name="Hensch T.K."/>
            <person name="Hirokawa N."/>
            <person name="Hill D."/>
            <person name="Huminiecki L."/>
            <person name="Iacono M."/>
            <person name="Ikeo K."/>
            <person name="Iwama A."/>
            <person name="Ishikawa T."/>
            <person name="Jakt M."/>
            <person name="Kanapin A."/>
            <person name="Katoh M."/>
            <person name="Kawasawa Y."/>
            <person name="Kelso J."/>
            <person name="Kitamura H."/>
            <person name="Kitano H."/>
            <person name="Kollias G."/>
            <person name="Krishnan S.P."/>
            <person name="Kruger A."/>
            <person name="Kummerfeld S.K."/>
            <person name="Kurochkin I.V."/>
            <person name="Lareau L.F."/>
            <person name="Lazarevic D."/>
            <person name="Lipovich L."/>
            <person name="Liu J."/>
            <person name="Liuni S."/>
            <person name="McWilliam S."/>
            <person name="Madan Babu M."/>
            <person name="Madera M."/>
            <person name="Marchionni L."/>
            <person name="Matsuda H."/>
            <person name="Matsuzawa S."/>
            <person name="Miki H."/>
            <person name="Mignone F."/>
            <person name="Miyake S."/>
            <person name="Morris K."/>
            <person name="Mottagui-Tabar S."/>
            <person name="Mulder N."/>
            <person name="Nakano N."/>
            <person name="Nakauchi H."/>
            <person name="Ng P."/>
            <person name="Nilsson R."/>
            <person name="Nishiguchi S."/>
            <person name="Nishikawa S."/>
            <person name="Nori F."/>
            <person name="Ohara O."/>
            <person name="Okazaki Y."/>
            <person name="Orlando V."/>
            <person name="Pang K.C."/>
            <person name="Pavan W.J."/>
            <person name="Pavesi G."/>
            <person name="Pesole G."/>
            <person name="Petrovsky N."/>
            <person name="Piazza S."/>
            <person name="Reed J."/>
            <person name="Reid J.F."/>
            <person name="Ring B.Z."/>
            <person name="Ringwald M."/>
            <person name="Rost B."/>
            <person name="Ruan Y."/>
            <person name="Salzberg S.L."/>
            <person name="Sandelin A."/>
            <person name="Schneider C."/>
            <person name="Schoenbach C."/>
            <person name="Sekiguchi K."/>
            <person name="Semple C.A."/>
            <person name="Seno S."/>
            <person name="Sessa L."/>
            <person name="Sheng Y."/>
            <person name="Shibata Y."/>
            <person name="Shimada H."/>
            <person name="Shimada K."/>
            <person name="Silva D."/>
            <person name="Sinclair B."/>
            <person name="Sperling S."/>
            <person name="Stupka E."/>
            <person name="Sugiura K."/>
            <person name="Sultana R."/>
            <person name="Takenaka Y."/>
            <person name="Taki K."/>
            <person name="Tammoja K."/>
            <person name="Tan S.L."/>
            <person name="Tang S."/>
            <person name="Taylor M.S."/>
            <person name="Tegner J."/>
            <person name="Teichmann S.A."/>
            <person name="Ueda H.R."/>
            <person name="van Nimwegen E."/>
            <person name="Verardo R."/>
            <person name="Wei C.L."/>
            <person name="Yagi K."/>
            <person name="Yamanishi H."/>
            <person name="Zabarovsky E."/>
            <person name="Zhu S."/>
            <person name="Zimmer A."/>
            <person name="Hide W."/>
            <person name="Bult C."/>
            <person name="Grimmond S.M."/>
            <person name="Teasdale R.D."/>
            <person name="Liu E.T."/>
            <person name="Brusic V."/>
            <person name="Quackenbush J."/>
            <person name="Wahlestedt C."/>
            <person name="Mattick J.S."/>
            <person name="Hume D.A."/>
            <person name="Kai C."/>
            <person name="Sasaki D."/>
            <person name="Tomaru Y."/>
            <person name="Fukuda S."/>
            <person name="Kanamori-Katayama M."/>
            <person name="Suzuki M."/>
            <person name="Aoki J."/>
            <person name="Arakawa T."/>
            <person name="Iida J."/>
            <person name="Imamura K."/>
            <person name="Itoh M."/>
            <person name="Kato T."/>
            <person name="Kawaji H."/>
            <person name="Kawagashira N."/>
            <person name="Kawashima T."/>
            <person name="Kojima M."/>
            <person name="Kondo S."/>
            <person name="Konno H."/>
            <person name="Nakano K."/>
            <person name="Ninomiya N."/>
            <person name="Nishio T."/>
            <person name="Okada M."/>
            <person name="Plessy C."/>
            <person name="Shibata K."/>
            <person name="Shiraki T."/>
            <person name="Suzuki S."/>
            <person name="Tagami M."/>
            <person name="Waki K."/>
            <person name="Watahiki A."/>
            <person name="Okamura-Oho Y."/>
            <person name="Suzuki H."/>
            <person name="Kawai J."/>
            <person name="Hayashizaki Y."/>
        </authorList>
    </citation>
    <scope>NUCLEOTIDE SEQUENCE [LARGE SCALE MRNA] (ISOFORMS 1 AND 2)</scope>
    <source>
        <strain>C57BL/6J</strain>
        <tissue>Bone marrow</tissue>
        <tissue>Fetal head</tissue>
        <tissue>Hippocampus</tissue>
        <tissue>Thymus</tissue>
    </source>
</reference>
<reference key="2">
    <citation type="journal article" date="2004" name="Genome Res.">
        <title>The status, quality, and expansion of the NIH full-length cDNA project: the Mammalian Gene Collection (MGC).</title>
        <authorList>
            <consortium name="The MGC Project Team"/>
        </authorList>
    </citation>
    <scope>NUCLEOTIDE SEQUENCE [LARGE SCALE MRNA] (ISOFORM 1)</scope>
    <scope>VARIANT THR-235</scope>
    <source>
        <strain>FVB/N</strain>
        <tissue>Mammary tumor</tissue>
    </source>
</reference>
<accession>Q8K2Z8</accession>
<accession>Q3UBX3</accession>
<accession>Q3V3A5</accession>
<accession>Q8BUN2</accession>
<accession>Q8BVX5</accession>
<sequence length="378" mass="42935">MSVSGLKAELKFLASIFDKNHERFRIVSWKLDELHCQFLVPPPPPPPGSSLSPPPPLTLHCNITESYPSSSPIWFVDSDDPNLTSVLERLEDTKNNSSLRQQLKWLICDLCRLYNLPKHLDVEMLDQPLPTGQNGTTEEVTSEEEEEEEMAEDIEDLDHYEMKEEEPINGKKSEDEGIEKENLAILEKIRKTQRQDHLNGAVSGSVQASDRLMKELRDVYRSQSYKAGIYSVELINDSLYDWHVKLHKVDSDSPLHSDLQILKEKEGIEYILLNFSFKDNFPFDPPFVRVVLPVLSGGYVLGGGALCMELLTKQGWSSAYSIESVIMQINATLVKGKARVQFGANKNQYNLARAQQSYNSIVQIHEKNGWYTPPKEDG</sequence>
<comment type="function">
    <text evidence="1">Accepts ubiquitin from the E1 complex and catalyzes its covalent attachment to other proteins. In vitro catalyzes 'Lys-48'-linked polyubiquitination.</text>
</comment>
<comment type="catalytic activity">
    <reaction evidence="2">
        <text>S-ubiquitinyl-[E1 ubiquitin-activating enzyme]-L-cysteine + [E2 ubiquitin-conjugating enzyme]-L-cysteine = [E1 ubiquitin-activating enzyme]-L-cysteine + S-ubiquitinyl-[E2 ubiquitin-conjugating enzyme]-L-cysteine.</text>
        <dbReference type="EC" id="2.3.2.23"/>
    </reaction>
</comment>
<comment type="pathway">
    <text evidence="2">Protein modification; protein ubiquitination.</text>
</comment>
<comment type="subcellular location">
    <subcellularLocation>
        <location evidence="1">Cytoplasm</location>
    </subcellularLocation>
</comment>
<comment type="alternative products">
    <event type="alternative splicing"/>
    <isoform>
        <id>Q8K2Z8-1</id>
        <name>1</name>
        <sequence type="displayed"/>
    </isoform>
    <isoform>
        <id>Q8K2Z8-2</id>
        <name>2</name>
        <sequence type="described" ref="VSP_017300"/>
    </isoform>
</comment>
<comment type="PTM">
    <text evidence="1">Auto-ubiquitinated in vitro.</text>
</comment>
<comment type="similarity">
    <text evidence="2">Belongs to the ubiquitin-conjugating enzyme family.</text>
</comment>
<name>UB2Q2_MOUSE</name>
<evidence type="ECO:0000250" key="1">
    <source>
        <dbReference type="UniProtKB" id="Q8WVN8"/>
    </source>
</evidence>
<evidence type="ECO:0000255" key="2">
    <source>
        <dbReference type="PROSITE-ProRule" id="PRU00388"/>
    </source>
</evidence>
<evidence type="ECO:0000256" key="3">
    <source>
        <dbReference type="SAM" id="MobiDB-lite"/>
    </source>
</evidence>
<evidence type="ECO:0000269" key="4">
    <source>
    </source>
</evidence>
<evidence type="ECO:0000303" key="5">
    <source>
    </source>
</evidence>
<evidence type="ECO:0000305" key="6"/>
<feature type="chain" id="PRO_0000223880" description="Ubiquitin-conjugating enzyme E2 Q2">
    <location>
        <begin position="1"/>
        <end position="378"/>
    </location>
</feature>
<feature type="domain" description="UBC core" evidence="2">
    <location>
        <begin position="207"/>
        <end position="371"/>
    </location>
</feature>
<feature type="region of interest" description="Disordered" evidence="3">
    <location>
        <begin position="126"/>
        <end position="152"/>
    </location>
</feature>
<feature type="compositionally biased region" description="Acidic residues" evidence="3">
    <location>
        <begin position="140"/>
        <end position="152"/>
    </location>
</feature>
<feature type="active site" description="Glycyl thioester intermediate" evidence="2">
    <location>
        <position position="307"/>
    </location>
</feature>
<feature type="splice variant" id="VSP_017300" description="In isoform 2." evidence="5">
    <location>
        <begin position="1"/>
        <end position="123"/>
    </location>
</feature>
<feature type="sequence variant" description="In strain: FVB/N." evidence="4">
    <original>I</original>
    <variation>T</variation>
    <location>
        <position position="235"/>
    </location>
</feature>
<feature type="sequence conflict" description="In Ref. 1; BAC38813." evidence="6" ref="1">
    <original>L</original>
    <variation>Q</variation>
    <location>
        <position position="246"/>
    </location>
</feature>